<name>SYS_RICPR</name>
<organism>
    <name type="scientific">Rickettsia prowazekii (strain Madrid E)</name>
    <dbReference type="NCBI Taxonomy" id="272947"/>
    <lineage>
        <taxon>Bacteria</taxon>
        <taxon>Pseudomonadati</taxon>
        <taxon>Pseudomonadota</taxon>
        <taxon>Alphaproteobacteria</taxon>
        <taxon>Rickettsiales</taxon>
        <taxon>Rickettsiaceae</taxon>
        <taxon>Rickettsieae</taxon>
        <taxon>Rickettsia</taxon>
        <taxon>typhus group</taxon>
    </lineage>
</organism>
<feature type="chain" id="PRO_0000122110" description="Serine--tRNA ligase">
    <location>
        <begin position="1"/>
        <end position="425"/>
    </location>
</feature>
<feature type="binding site" evidence="1">
    <location>
        <begin position="228"/>
        <end position="230"/>
    </location>
    <ligand>
        <name>L-serine</name>
        <dbReference type="ChEBI" id="CHEBI:33384"/>
    </ligand>
</feature>
<feature type="binding site" evidence="1">
    <location>
        <begin position="259"/>
        <end position="261"/>
    </location>
    <ligand>
        <name>ATP</name>
        <dbReference type="ChEBI" id="CHEBI:30616"/>
    </ligand>
</feature>
<feature type="binding site" evidence="1">
    <location>
        <position position="282"/>
    </location>
    <ligand>
        <name>L-serine</name>
        <dbReference type="ChEBI" id="CHEBI:33384"/>
    </ligand>
</feature>
<feature type="binding site" evidence="1">
    <location>
        <begin position="346"/>
        <end position="349"/>
    </location>
    <ligand>
        <name>ATP</name>
        <dbReference type="ChEBI" id="CHEBI:30616"/>
    </ligand>
</feature>
<feature type="binding site" evidence="1">
    <location>
        <position position="382"/>
    </location>
    <ligand>
        <name>L-serine</name>
        <dbReference type="ChEBI" id="CHEBI:33384"/>
    </ligand>
</feature>
<comment type="function">
    <text evidence="1">Catalyzes the attachment of serine to tRNA(Ser). Is also able to aminoacylate tRNA(Sec) with serine, to form the misacylated tRNA L-seryl-tRNA(Sec), which will be further converted into selenocysteinyl-tRNA(Sec).</text>
</comment>
<comment type="catalytic activity">
    <reaction evidence="1">
        <text>tRNA(Ser) + L-serine + ATP = L-seryl-tRNA(Ser) + AMP + diphosphate + H(+)</text>
        <dbReference type="Rhea" id="RHEA:12292"/>
        <dbReference type="Rhea" id="RHEA-COMP:9669"/>
        <dbReference type="Rhea" id="RHEA-COMP:9703"/>
        <dbReference type="ChEBI" id="CHEBI:15378"/>
        <dbReference type="ChEBI" id="CHEBI:30616"/>
        <dbReference type="ChEBI" id="CHEBI:33019"/>
        <dbReference type="ChEBI" id="CHEBI:33384"/>
        <dbReference type="ChEBI" id="CHEBI:78442"/>
        <dbReference type="ChEBI" id="CHEBI:78533"/>
        <dbReference type="ChEBI" id="CHEBI:456215"/>
        <dbReference type="EC" id="6.1.1.11"/>
    </reaction>
</comment>
<comment type="catalytic activity">
    <reaction evidence="1">
        <text>tRNA(Sec) + L-serine + ATP = L-seryl-tRNA(Sec) + AMP + diphosphate + H(+)</text>
        <dbReference type="Rhea" id="RHEA:42580"/>
        <dbReference type="Rhea" id="RHEA-COMP:9742"/>
        <dbReference type="Rhea" id="RHEA-COMP:10128"/>
        <dbReference type="ChEBI" id="CHEBI:15378"/>
        <dbReference type="ChEBI" id="CHEBI:30616"/>
        <dbReference type="ChEBI" id="CHEBI:33019"/>
        <dbReference type="ChEBI" id="CHEBI:33384"/>
        <dbReference type="ChEBI" id="CHEBI:78442"/>
        <dbReference type="ChEBI" id="CHEBI:78533"/>
        <dbReference type="ChEBI" id="CHEBI:456215"/>
        <dbReference type="EC" id="6.1.1.11"/>
    </reaction>
</comment>
<comment type="pathway">
    <text evidence="1">Aminoacyl-tRNA biosynthesis; selenocysteinyl-tRNA(Sec) biosynthesis; L-seryl-tRNA(Sec) from L-serine and tRNA(Sec): step 1/1.</text>
</comment>
<comment type="subunit">
    <text evidence="1">Homodimer. The tRNA molecule binds across the dimer.</text>
</comment>
<comment type="subcellular location">
    <subcellularLocation>
        <location evidence="1">Cytoplasm</location>
    </subcellularLocation>
</comment>
<comment type="domain">
    <text evidence="1">Consists of two distinct domains, a catalytic core and a N-terminal extension that is involved in tRNA binding.</text>
</comment>
<comment type="similarity">
    <text evidence="1">Belongs to the class-II aminoacyl-tRNA synthetase family. Type-1 seryl-tRNA synthetase subfamily.</text>
</comment>
<proteinExistence type="inferred from homology"/>
<keyword id="KW-0030">Aminoacyl-tRNA synthetase</keyword>
<keyword id="KW-0067">ATP-binding</keyword>
<keyword id="KW-0963">Cytoplasm</keyword>
<keyword id="KW-0436">Ligase</keyword>
<keyword id="KW-0547">Nucleotide-binding</keyword>
<keyword id="KW-0648">Protein biosynthesis</keyword>
<keyword id="KW-1185">Reference proteome</keyword>
<dbReference type="EC" id="6.1.1.11" evidence="1"/>
<dbReference type="EMBL" id="AJ235273">
    <property type="protein sequence ID" value="CAA15209.1"/>
    <property type="molecule type" value="Genomic_DNA"/>
</dbReference>
<dbReference type="PIR" id="A71639">
    <property type="entry name" value="A71639"/>
</dbReference>
<dbReference type="RefSeq" id="NP_221133.1">
    <property type="nucleotide sequence ID" value="NC_000963.1"/>
</dbReference>
<dbReference type="RefSeq" id="WP_004596938.1">
    <property type="nucleotide sequence ID" value="NC_000963.1"/>
</dbReference>
<dbReference type="SMR" id="Q9ZCG5"/>
<dbReference type="STRING" id="272947.gene:17555852"/>
<dbReference type="EnsemblBacteria" id="CAA15209">
    <property type="protein sequence ID" value="CAA15209"/>
    <property type="gene ID" value="CAA15209"/>
</dbReference>
<dbReference type="GeneID" id="57569906"/>
<dbReference type="KEGG" id="rpr:RP783"/>
<dbReference type="PATRIC" id="fig|272947.5.peg.819"/>
<dbReference type="eggNOG" id="COG0172">
    <property type="taxonomic scope" value="Bacteria"/>
</dbReference>
<dbReference type="HOGENOM" id="CLU_023797_1_1_5"/>
<dbReference type="OrthoDB" id="9804647at2"/>
<dbReference type="UniPathway" id="UPA00906">
    <property type="reaction ID" value="UER00895"/>
</dbReference>
<dbReference type="Proteomes" id="UP000002480">
    <property type="component" value="Chromosome"/>
</dbReference>
<dbReference type="GO" id="GO:0005737">
    <property type="term" value="C:cytoplasm"/>
    <property type="evidence" value="ECO:0007669"/>
    <property type="project" value="UniProtKB-SubCell"/>
</dbReference>
<dbReference type="GO" id="GO:0005524">
    <property type="term" value="F:ATP binding"/>
    <property type="evidence" value="ECO:0007669"/>
    <property type="project" value="UniProtKB-UniRule"/>
</dbReference>
<dbReference type="GO" id="GO:0004828">
    <property type="term" value="F:serine-tRNA ligase activity"/>
    <property type="evidence" value="ECO:0007669"/>
    <property type="project" value="UniProtKB-UniRule"/>
</dbReference>
<dbReference type="GO" id="GO:0016260">
    <property type="term" value="P:selenocysteine biosynthetic process"/>
    <property type="evidence" value="ECO:0007669"/>
    <property type="project" value="UniProtKB-UniRule"/>
</dbReference>
<dbReference type="GO" id="GO:0006434">
    <property type="term" value="P:seryl-tRNA aminoacylation"/>
    <property type="evidence" value="ECO:0007669"/>
    <property type="project" value="UniProtKB-UniRule"/>
</dbReference>
<dbReference type="CDD" id="cd00770">
    <property type="entry name" value="SerRS_core"/>
    <property type="match status" value="1"/>
</dbReference>
<dbReference type="Gene3D" id="3.30.930.10">
    <property type="entry name" value="Bira Bifunctional Protein, Domain 2"/>
    <property type="match status" value="1"/>
</dbReference>
<dbReference type="Gene3D" id="1.10.287.40">
    <property type="entry name" value="Serine-tRNA synthetase, tRNA binding domain"/>
    <property type="match status" value="1"/>
</dbReference>
<dbReference type="HAMAP" id="MF_00176">
    <property type="entry name" value="Ser_tRNA_synth_type1"/>
    <property type="match status" value="1"/>
</dbReference>
<dbReference type="InterPro" id="IPR002314">
    <property type="entry name" value="aa-tRNA-synt_IIb"/>
</dbReference>
<dbReference type="InterPro" id="IPR006195">
    <property type="entry name" value="aa-tRNA-synth_II"/>
</dbReference>
<dbReference type="InterPro" id="IPR045864">
    <property type="entry name" value="aa-tRNA-synth_II/BPL/LPL"/>
</dbReference>
<dbReference type="InterPro" id="IPR002317">
    <property type="entry name" value="Ser-tRNA-ligase_type_1"/>
</dbReference>
<dbReference type="InterPro" id="IPR015866">
    <property type="entry name" value="Ser-tRNA-synth_1_N"/>
</dbReference>
<dbReference type="InterPro" id="IPR042103">
    <property type="entry name" value="SerRS_1_N_sf"/>
</dbReference>
<dbReference type="InterPro" id="IPR033729">
    <property type="entry name" value="SerRS_core"/>
</dbReference>
<dbReference type="InterPro" id="IPR010978">
    <property type="entry name" value="tRNA-bd_arm"/>
</dbReference>
<dbReference type="NCBIfam" id="TIGR00414">
    <property type="entry name" value="serS"/>
    <property type="match status" value="1"/>
</dbReference>
<dbReference type="PANTHER" id="PTHR43697:SF1">
    <property type="entry name" value="SERINE--TRNA LIGASE"/>
    <property type="match status" value="1"/>
</dbReference>
<dbReference type="PANTHER" id="PTHR43697">
    <property type="entry name" value="SERYL-TRNA SYNTHETASE"/>
    <property type="match status" value="1"/>
</dbReference>
<dbReference type="Pfam" id="PF02403">
    <property type="entry name" value="Seryl_tRNA_N"/>
    <property type="match status" value="1"/>
</dbReference>
<dbReference type="Pfam" id="PF00587">
    <property type="entry name" value="tRNA-synt_2b"/>
    <property type="match status" value="1"/>
</dbReference>
<dbReference type="PIRSF" id="PIRSF001529">
    <property type="entry name" value="Ser-tRNA-synth_IIa"/>
    <property type="match status" value="1"/>
</dbReference>
<dbReference type="PRINTS" id="PR00981">
    <property type="entry name" value="TRNASYNTHSER"/>
</dbReference>
<dbReference type="SUPFAM" id="SSF55681">
    <property type="entry name" value="Class II aaRS and biotin synthetases"/>
    <property type="match status" value="1"/>
</dbReference>
<dbReference type="SUPFAM" id="SSF46589">
    <property type="entry name" value="tRNA-binding arm"/>
    <property type="match status" value="1"/>
</dbReference>
<dbReference type="PROSITE" id="PS50862">
    <property type="entry name" value="AA_TRNA_LIGASE_II"/>
    <property type="match status" value="1"/>
</dbReference>
<sequence length="425" mass="48644">MLNIKWIRENQELFDEKLSQRFIEPMSSKIAMLDQEKRKITSLIQEFQHARKVKSKILGNMVSKSGEEFEELQRDVNHINEKLAELEQNLDNNNELNELLNMLPNIPDEEVPYGIDGSMNKLVRAYGKTNKNALNKQHFELGTKLNLMDFEQTAKISGSRFVTLKGDLAKLERALINFMIDIHTKEFDFFEISPPFLVRDRAMYNAGQLPKFSEESFITTNGYRLIPTAEVSLVNIVADTIIQREKLPMRYVAYTTCFRSEAGSSGRDTRGMIRLHQFGKVELVSITTPEESKNEHEYITNASETILKKLDLPYRVMLLCTGDMGFAAKKTYDIEVWLPGQNQYREIASCSNCGDFQARRMKARYKEFGSNETTLVHTLNASGLPIGRTIVAILENYQNNDGSITIPDVLINYMGGLQKITTYSE</sequence>
<protein>
    <recommendedName>
        <fullName evidence="1">Serine--tRNA ligase</fullName>
        <ecNumber evidence="1">6.1.1.11</ecNumber>
    </recommendedName>
    <alternativeName>
        <fullName evidence="1">Seryl-tRNA synthetase</fullName>
        <shortName evidence="1">SerRS</shortName>
    </alternativeName>
    <alternativeName>
        <fullName evidence="1">Seryl-tRNA(Ser/Sec) synthetase</fullName>
    </alternativeName>
</protein>
<reference key="1">
    <citation type="journal article" date="1998" name="Nature">
        <title>The genome sequence of Rickettsia prowazekii and the origin of mitochondria.</title>
        <authorList>
            <person name="Andersson S.G.E."/>
            <person name="Zomorodipour A."/>
            <person name="Andersson J.O."/>
            <person name="Sicheritz-Ponten T."/>
            <person name="Alsmark U.C.M."/>
            <person name="Podowski R.M."/>
            <person name="Naeslund A.K."/>
            <person name="Eriksson A.-S."/>
            <person name="Winkler H.H."/>
            <person name="Kurland C.G."/>
        </authorList>
    </citation>
    <scope>NUCLEOTIDE SEQUENCE [LARGE SCALE GENOMIC DNA]</scope>
    <source>
        <strain>Madrid E</strain>
    </source>
</reference>
<accession>Q9ZCG5</accession>
<evidence type="ECO:0000255" key="1">
    <source>
        <dbReference type="HAMAP-Rule" id="MF_00176"/>
    </source>
</evidence>
<gene>
    <name evidence="1" type="primary">serS</name>
    <name type="ordered locus">RP783</name>
</gene>